<evidence type="ECO:0000255" key="1">
    <source>
        <dbReference type="HAMAP-Rule" id="MF_00004"/>
    </source>
</evidence>
<comment type="function">
    <text evidence="1">Catalyzes a salvage reaction resulting in the formation of AMP, that is energically less costly than de novo synthesis.</text>
</comment>
<comment type="catalytic activity">
    <reaction evidence="1">
        <text>AMP + diphosphate = 5-phospho-alpha-D-ribose 1-diphosphate + adenine</text>
        <dbReference type="Rhea" id="RHEA:16609"/>
        <dbReference type="ChEBI" id="CHEBI:16708"/>
        <dbReference type="ChEBI" id="CHEBI:33019"/>
        <dbReference type="ChEBI" id="CHEBI:58017"/>
        <dbReference type="ChEBI" id="CHEBI:456215"/>
        <dbReference type="EC" id="2.4.2.7"/>
    </reaction>
</comment>
<comment type="pathway">
    <text evidence="1">Purine metabolism; AMP biosynthesis via salvage pathway; AMP from adenine: step 1/1.</text>
</comment>
<comment type="subunit">
    <text evidence="1">Homodimer.</text>
</comment>
<comment type="subcellular location">
    <subcellularLocation>
        <location evidence="1">Cytoplasm</location>
    </subcellularLocation>
</comment>
<comment type="similarity">
    <text evidence="1">Belongs to the purine/pyrimidine phosphoribosyltransferase family.</text>
</comment>
<proteinExistence type="inferred from homology"/>
<dbReference type="EC" id="2.4.2.7" evidence="1"/>
<dbReference type="EMBL" id="CP000920">
    <property type="protein sequence ID" value="ACO21624.1"/>
    <property type="molecule type" value="Genomic_DNA"/>
</dbReference>
<dbReference type="RefSeq" id="WP_001049323.1">
    <property type="nucleotide sequence ID" value="NC_012467.1"/>
</dbReference>
<dbReference type="SMR" id="C1CLS6"/>
<dbReference type="KEGG" id="spp:SPP_1600"/>
<dbReference type="HOGENOM" id="CLU_063339_3_0_9"/>
<dbReference type="UniPathway" id="UPA00588">
    <property type="reaction ID" value="UER00646"/>
</dbReference>
<dbReference type="GO" id="GO:0005737">
    <property type="term" value="C:cytoplasm"/>
    <property type="evidence" value="ECO:0007669"/>
    <property type="project" value="UniProtKB-SubCell"/>
</dbReference>
<dbReference type="GO" id="GO:0002055">
    <property type="term" value="F:adenine binding"/>
    <property type="evidence" value="ECO:0007669"/>
    <property type="project" value="TreeGrafter"/>
</dbReference>
<dbReference type="GO" id="GO:0003999">
    <property type="term" value="F:adenine phosphoribosyltransferase activity"/>
    <property type="evidence" value="ECO:0007669"/>
    <property type="project" value="UniProtKB-UniRule"/>
</dbReference>
<dbReference type="GO" id="GO:0016208">
    <property type="term" value="F:AMP binding"/>
    <property type="evidence" value="ECO:0007669"/>
    <property type="project" value="TreeGrafter"/>
</dbReference>
<dbReference type="GO" id="GO:0006168">
    <property type="term" value="P:adenine salvage"/>
    <property type="evidence" value="ECO:0007669"/>
    <property type="project" value="InterPro"/>
</dbReference>
<dbReference type="GO" id="GO:0044209">
    <property type="term" value="P:AMP salvage"/>
    <property type="evidence" value="ECO:0007669"/>
    <property type="project" value="UniProtKB-UniRule"/>
</dbReference>
<dbReference type="GO" id="GO:0006166">
    <property type="term" value="P:purine ribonucleoside salvage"/>
    <property type="evidence" value="ECO:0007669"/>
    <property type="project" value="UniProtKB-KW"/>
</dbReference>
<dbReference type="CDD" id="cd06223">
    <property type="entry name" value="PRTases_typeI"/>
    <property type="match status" value="1"/>
</dbReference>
<dbReference type="FunFam" id="3.40.50.2020:FF:000004">
    <property type="entry name" value="Adenine phosphoribosyltransferase"/>
    <property type="match status" value="1"/>
</dbReference>
<dbReference type="Gene3D" id="3.40.50.2020">
    <property type="match status" value="1"/>
</dbReference>
<dbReference type="HAMAP" id="MF_00004">
    <property type="entry name" value="Aden_phosphoribosyltr"/>
    <property type="match status" value="1"/>
</dbReference>
<dbReference type="InterPro" id="IPR005764">
    <property type="entry name" value="Ade_phspho_trans"/>
</dbReference>
<dbReference type="InterPro" id="IPR000836">
    <property type="entry name" value="PRibTrfase_dom"/>
</dbReference>
<dbReference type="InterPro" id="IPR029057">
    <property type="entry name" value="PRTase-like"/>
</dbReference>
<dbReference type="InterPro" id="IPR050054">
    <property type="entry name" value="UPRTase/APRTase"/>
</dbReference>
<dbReference type="NCBIfam" id="TIGR01090">
    <property type="entry name" value="apt"/>
    <property type="match status" value="1"/>
</dbReference>
<dbReference type="NCBIfam" id="NF002633">
    <property type="entry name" value="PRK02304.1-2"/>
    <property type="match status" value="1"/>
</dbReference>
<dbReference type="NCBIfam" id="NF002634">
    <property type="entry name" value="PRK02304.1-3"/>
    <property type="match status" value="1"/>
</dbReference>
<dbReference type="NCBIfam" id="NF002636">
    <property type="entry name" value="PRK02304.1-5"/>
    <property type="match status" value="1"/>
</dbReference>
<dbReference type="PANTHER" id="PTHR32315">
    <property type="entry name" value="ADENINE PHOSPHORIBOSYLTRANSFERASE"/>
    <property type="match status" value="1"/>
</dbReference>
<dbReference type="PANTHER" id="PTHR32315:SF3">
    <property type="entry name" value="ADENINE PHOSPHORIBOSYLTRANSFERASE"/>
    <property type="match status" value="1"/>
</dbReference>
<dbReference type="Pfam" id="PF00156">
    <property type="entry name" value="Pribosyltran"/>
    <property type="match status" value="1"/>
</dbReference>
<dbReference type="SUPFAM" id="SSF53271">
    <property type="entry name" value="PRTase-like"/>
    <property type="match status" value="1"/>
</dbReference>
<dbReference type="PROSITE" id="PS00103">
    <property type="entry name" value="PUR_PYR_PR_TRANSFER"/>
    <property type="match status" value="1"/>
</dbReference>
<sequence>MNLKDYIATIENYPKEGITFRDISPLMADGNAYSYAVREIVQYATDKKVDMIVGPEARGFIVGCPVAFELGIGFAPVRKPGKLPREVISADYEKEYGVDTLTMHADAIKPGQRVLIVDDLLATGGTVKATIEMIEKLGGVMAGCAFLVELDELNGREKIGDYDYKVLMHY</sequence>
<organism>
    <name type="scientific">Streptococcus pneumoniae (strain P1031)</name>
    <dbReference type="NCBI Taxonomy" id="488223"/>
    <lineage>
        <taxon>Bacteria</taxon>
        <taxon>Bacillati</taxon>
        <taxon>Bacillota</taxon>
        <taxon>Bacilli</taxon>
        <taxon>Lactobacillales</taxon>
        <taxon>Streptococcaceae</taxon>
        <taxon>Streptococcus</taxon>
    </lineage>
</organism>
<protein>
    <recommendedName>
        <fullName evidence="1">Adenine phosphoribosyltransferase</fullName>
        <shortName evidence="1">APRT</shortName>
        <ecNumber evidence="1">2.4.2.7</ecNumber>
    </recommendedName>
</protein>
<name>APT_STRZP</name>
<gene>
    <name evidence="1" type="primary">apt</name>
    <name type="ordered locus">SPP_1600</name>
</gene>
<keyword id="KW-0963">Cytoplasm</keyword>
<keyword id="KW-0328">Glycosyltransferase</keyword>
<keyword id="KW-0660">Purine salvage</keyword>
<keyword id="KW-0808">Transferase</keyword>
<feature type="chain" id="PRO_1000116261" description="Adenine phosphoribosyltransferase">
    <location>
        <begin position="1"/>
        <end position="170"/>
    </location>
</feature>
<accession>C1CLS6</accession>
<reference key="1">
    <citation type="journal article" date="2010" name="Genome Biol.">
        <title>Structure and dynamics of the pan-genome of Streptococcus pneumoniae and closely related species.</title>
        <authorList>
            <person name="Donati C."/>
            <person name="Hiller N.L."/>
            <person name="Tettelin H."/>
            <person name="Muzzi A."/>
            <person name="Croucher N.J."/>
            <person name="Angiuoli S.V."/>
            <person name="Oggioni M."/>
            <person name="Dunning Hotopp J.C."/>
            <person name="Hu F.Z."/>
            <person name="Riley D.R."/>
            <person name="Covacci A."/>
            <person name="Mitchell T.J."/>
            <person name="Bentley S.D."/>
            <person name="Kilian M."/>
            <person name="Ehrlich G.D."/>
            <person name="Rappuoli R."/>
            <person name="Moxon E.R."/>
            <person name="Masignani V."/>
        </authorList>
    </citation>
    <scope>NUCLEOTIDE SEQUENCE [LARGE SCALE GENOMIC DNA]</scope>
    <source>
        <strain>P1031</strain>
    </source>
</reference>